<proteinExistence type="inferred from homology"/>
<name>END4_METPE</name>
<protein>
    <recommendedName>
        <fullName evidence="1">Probable endonuclease 4</fullName>
        <ecNumber evidence="1">3.1.21.2</ecNumber>
    </recommendedName>
    <alternativeName>
        <fullName evidence="1">Endodeoxyribonuclease IV</fullName>
    </alternativeName>
    <alternativeName>
        <fullName evidence="1">Endonuclease IV</fullName>
    </alternativeName>
</protein>
<organism>
    <name type="scientific">Methanosphaerula palustris (strain ATCC BAA-1556 / DSM 19958 / E1-9c)</name>
    <dbReference type="NCBI Taxonomy" id="521011"/>
    <lineage>
        <taxon>Archaea</taxon>
        <taxon>Methanobacteriati</taxon>
        <taxon>Methanobacteriota</taxon>
        <taxon>Stenosarchaea group</taxon>
        <taxon>Methanomicrobia</taxon>
        <taxon>Methanomicrobiales</taxon>
        <taxon>Methanoregulaceae</taxon>
        <taxon>Methanosphaerula</taxon>
    </lineage>
</organism>
<comment type="function">
    <text evidence="1">Endonuclease IV plays a role in DNA repair. It cleaves phosphodiester bonds at apurinic or apyrimidinic (AP) sites, generating a 3'-hydroxyl group and a 5'-terminal sugar phosphate.</text>
</comment>
<comment type="catalytic activity">
    <reaction evidence="1">
        <text>Endonucleolytic cleavage to 5'-phosphooligonucleotide end-products.</text>
        <dbReference type="EC" id="3.1.21.2"/>
    </reaction>
</comment>
<comment type="cofactor">
    <cofactor evidence="1">
        <name>Zn(2+)</name>
        <dbReference type="ChEBI" id="CHEBI:29105"/>
    </cofactor>
    <text evidence="1">Binds 3 Zn(2+) ions.</text>
</comment>
<comment type="similarity">
    <text evidence="1">Belongs to the AP endonuclease 2 family.</text>
</comment>
<keyword id="KW-0227">DNA damage</keyword>
<keyword id="KW-0234">DNA repair</keyword>
<keyword id="KW-0255">Endonuclease</keyword>
<keyword id="KW-0378">Hydrolase</keyword>
<keyword id="KW-0479">Metal-binding</keyword>
<keyword id="KW-0540">Nuclease</keyword>
<keyword id="KW-1185">Reference proteome</keyword>
<keyword id="KW-0862">Zinc</keyword>
<evidence type="ECO:0000255" key="1">
    <source>
        <dbReference type="HAMAP-Rule" id="MF_00152"/>
    </source>
</evidence>
<gene>
    <name evidence="1" type="primary">nfo</name>
    <name type="ordered locus">Mpal_1968</name>
</gene>
<dbReference type="EC" id="3.1.21.2" evidence="1"/>
<dbReference type="EMBL" id="CP001338">
    <property type="protein sequence ID" value="ACL17271.1"/>
    <property type="molecule type" value="Genomic_DNA"/>
</dbReference>
<dbReference type="RefSeq" id="WP_012618590.1">
    <property type="nucleotide sequence ID" value="NC_011832.1"/>
</dbReference>
<dbReference type="SMR" id="B8GKX5"/>
<dbReference type="STRING" id="521011.Mpal_1968"/>
<dbReference type="GeneID" id="7270774"/>
<dbReference type="KEGG" id="mpl:Mpal_1968"/>
<dbReference type="eggNOG" id="arCOG01894">
    <property type="taxonomic scope" value="Archaea"/>
</dbReference>
<dbReference type="HOGENOM" id="CLU_025885_0_1_2"/>
<dbReference type="OrthoDB" id="33250at2157"/>
<dbReference type="Proteomes" id="UP000002457">
    <property type="component" value="Chromosome"/>
</dbReference>
<dbReference type="GO" id="GO:0008833">
    <property type="term" value="F:deoxyribonuclease IV (phage-T4-induced) activity"/>
    <property type="evidence" value="ECO:0007669"/>
    <property type="project" value="UniProtKB-UniRule"/>
</dbReference>
<dbReference type="GO" id="GO:0003677">
    <property type="term" value="F:DNA binding"/>
    <property type="evidence" value="ECO:0007669"/>
    <property type="project" value="InterPro"/>
</dbReference>
<dbReference type="GO" id="GO:0003906">
    <property type="term" value="F:DNA-(apurinic or apyrimidinic site) endonuclease activity"/>
    <property type="evidence" value="ECO:0007669"/>
    <property type="project" value="TreeGrafter"/>
</dbReference>
<dbReference type="GO" id="GO:0008081">
    <property type="term" value="F:phosphoric diester hydrolase activity"/>
    <property type="evidence" value="ECO:0007669"/>
    <property type="project" value="TreeGrafter"/>
</dbReference>
<dbReference type="GO" id="GO:0008270">
    <property type="term" value="F:zinc ion binding"/>
    <property type="evidence" value="ECO:0007669"/>
    <property type="project" value="UniProtKB-UniRule"/>
</dbReference>
<dbReference type="GO" id="GO:0006284">
    <property type="term" value="P:base-excision repair"/>
    <property type="evidence" value="ECO:0007669"/>
    <property type="project" value="TreeGrafter"/>
</dbReference>
<dbReference type="CDD" id="cd00019">
    <property type="entry name" value="AP2Ec"/>
    <property type="match status" value="1"/>
</dbReference>
<dbReference type="FunFam" id="3.20.20.150:FF:000001">
    <property type="entry name" value="Probable endonuclease 4"/>
    <property type="match status" value="1"/>
</dbReference>
<dbReference type="Gene3D" id="3.20.20.150">
    <property type="entry name" value="Divalent-metal-dependent TIM barrel enzymes"/>
    <property type="match status" value="1"/>
</dbReference>
<dbReference type="HAMAP" id="MF_00152">
    <property type="entry name" value="Nfo"/>
    <property type="match status" value="1"/>
</dbReference>
<dbReference type="InterPro" id="IPR001719">
    <property type="entry name" value="AP_endonuc_2"/>
</dbReference>
<dbReference type="InterPro" id="IPR018246">
    <property type="entry name" value="AP_endonuc_F2_Zn_BS"/>
</dbReference>
<dbReference type="InterPro" id="IPR036237">
    <property type="entry name" value="Xyl_isomerase-like_sf"/>
</dbReference>
<dbReference type="InterPro" id="IPR013022">
    <property type="entry name" value="Xyl_isomerase-like_TIM-brl"/>
</dbReference>
<dbReference type="NCBIfam" id="TIGR00587">
    <property type="entry name" value="nfo"/>
    <property type="match status" value="1"/>
</dbReference>
<dbReference type="PANTHER" id="PTHR21445:SF0">
    <property type="entry name" value="APURINIC-APYRIMIDINIC ENDONUCLEASE"/>
    <property type="match status" value="1"/>
</dbReference>
<dbReference type="PANTHER" id="PTHR21445">
    <property type="entry name" value="ENDONUCLEASE IV ENDODEOXYRIBONUCLEASE IV"/>
    <property type="match status" value="1"/>
</dbReference>
<dbReference type="Pfam" id="PF01261">
    <property type="entry name" value="AP_endonuc_2"/>
    <property type="match status" value="1"/>
</dbReference>
<dbReference type="SMART" id="SM00518">
    <property type="entry name" value="AP2Ec"/>
    <property type="match status" value="1"/>
</dbReference>
<dbReference type="SUPFAM" id="SSF51658">
    <property type="entry name" value="Xylose isomerase-like"/>
    <property type="match status" value="1"/>
</dbReference>
<dbReference type="PROSITE" id="PS00730">
    <property type="entry name" value="AP_NUCLEASE_F2_2"/>
    <property type="match status" value="1"/>
</dbReference>
<dbReference type="PROSITE" id="PS00731">
    <property type="entry name" value="AP_NUCLEASE_F2_3"/>
    <property type="match status" value="1"/>
</dbReference>
<dbReference type="PROSITE" id="PS51432">
    <property type="entry name" value="AP_NUCLEASE_F2_4"/>
    <property type="match status" value="1"/>
</dbReference>
<accession>B8GKX5</accession>
<sequence>MVKIGVHVSIAGSIARAVERAMAIDCDTFQIFSRNPRGWTFKPLAEEDAALFQGALGTSGIGPAVVHMPYLPNLASPKEEIWRKSVEALTEELHRCSMLDVPYLVTHLGHHMGEGIGAGEGRVQQAIDAAFSQSDPGSSRVMLLLENTAGEKNSVGSRFEEIGRIRESCSDPDRIGVCMDTCHAFAAGYDLRNEVGLSRTLEAFEDGIGIEHLHVIHLNDAKADIGSHLDRHTHIGLGMIGEEGCSGILTHPTLASLPFICETPEDAVRDNAANIRAVRRLAVPRA</sequence>
<feature type="chain" id="PRO_1000123331" description="Probable endonuclease 4">
    <location>
        <begin position="1"/>
        <end position="286"/>
    </location>
</feature>
<feature type="binding site" evidence="1">
    <location>
        <position position="67"/>
    </location>
    <ligand>
        <name>Zn(2+)</name>
        <dbReference type="ChEBI" id="CHEBI:29105"/>
        <label>1</label>
    </ligand>
</feature>
<feature type="binding site" evidence="1">
    <location>
        <position position="107"/>
    </location>
    <ligand>
        <name>Zn(2+)</name>
        <dbReference type="ChEBI" id="CHEBI:29105"/>
        <label>1</label>
    </ligand>
</feature>
<feature type="binding site" evidence="1">
    <location>
        <position position="146"/>
    </location>
    <ligand>
        <name>Zn(2+)</name>
        <dbReference type="ChEBI" id="CHEBI:29105"/>
        <label>1</label>
    </ligand>
</feature>
<feature type="binding site" evidence="1">
    <location>
        <position position="146"/>
    </location>
    <ligand>
        <name>Zn(2+)</name>
        <dbReference type="ChEBI" id="CHEBI:29105"/>
        <label>2</label>
    </ligand>
</feature>
<feature type="binding site" evidence="1">
    <location>
        <position position="180"/>
    </location>
    <ligand>
        <name>Zn(2+)</name>
        <dbReference type="ChEBI" id="CHEBI:29105"/>
        <label>2</label>
    </ligand>
</feature>
<feature type="binding site" evidence="1">
    <location>
        <position position="183"/>
    </location>
    <ligand>
        <name>Zn(2+)</name>
        <dbReference type="ChEBI" id="CHEBI:29105"/>
        <label>3</label>
    </ligand>
</feature>
<feature type="binding site" evidence="1">
    <location>
        <position position="217"/>
    </location>
    <ligand>
        <name>Zn(2+)</name>
        <dbReference type="ChEBI" id="CHEBI:29105"/>
        <label>2</label>
    </ligand>
</feature>
<feature type="binding site" evidence="1">
    <location>
        <position position="230"/>
    </location>
    <ligand>
        <name>Zn(2+)</name>
        <dbReference type="ChEBI" id="CHEBI:29105"/>
        <label>3</label>
    </ligand>
</feature>
<feature type="binding site" evidence="1">
    <location>
        <position position="232"/>
    </location>
    <ligand>
        <name>Zn(2+)</name>
        <dbReference type="ChEBI" id="CHEBI:29105"/>
        <label>3</label>
    </ligand>
</feature>
<feature type="binding site" evidence="1">
    <location>
        <position position="262"/>
    </location>
    <ligand>
        <name>Zn(2+)</name>
        <dbReference type="ChEBI" id="CHEBI:29105"/>
        <label>2</label>
    </ligand>
</feature>
<reference key="1">
    <citation type="journal article" date="2015" name="Genome Announc.">
        <title>Complete Genome Sequence of Methanosphaerula palustris E1-9CT, a Hydrogenotrophic Methanogen Isolated from a Minerotrophic Fen Peatland.</title>
        <authorList>
            <person name="Cadillo-Quiroz H."/>
            <person name="Browne P."/>
            <person name="Kyrpides N."/>
            <person name="Woyke T."/>
            <person name="Goodwin L."/>
            <person name="Detter C."/>
            <person name="Yavitt J.B."/>
            <person name="Zinder S.H."/>
        </authorList>
    </citation>
    <scope>NUCLEOTIDE SEQUENCE [LARGE SCALE GENOMIC DNA]</scope>
    <source>
        <strain>ATCC BAA-1556 / DSM 19958 / E1-9c</strain>
    </source>
</reference>